<reference key="1">
    <citation type="submission" date="2008-01" db="EMBL/GenBank/DDBJ databases">
        <title>HADP1, a novel pleckstrin homology domain protein, is required for cardiac contractility in zebrafish.</title>
        <authorList>
            <person name="Wythe J.D."/>
            <person name="Urness L.D."/>
            <person name="Jones C.A."/>
            <person name="Jurynec M."/>
            <person name="Grunwald D.J."/>
            <person name="MacRae C.A."/>
            <person name="Li D.Y."/>
        </authorList>
    </citation>
    <scope>NUCLEOTIDE SEQUENCE [MRNA]</scope>
    <source>
        <strain>AB</strain>
    </source>
</reference>
<sequence length="1197" mass="135554">MAAPLRRDTLPDNGSYGVCRDGRVFFIDDEARATTWLHPRTGQPVNSGHMIRSDLPSGWEEGFTKEGASFFIDHNQRTTTFIHPVTGQISTENSDFRLQDQPGGRMLKQPSSTISEASTTVTTSTVDSTSGSKGSRSSGRVHSFGKRDHAIKRNPSVPVVVRGWLYKQDSSGMRLWKRKWFVLADFCLFYYKDSREESVLGSIPLPSYTIAPVGPEDHISRKYAFKAEHTGMRTYYFSADTQEDMNGWVRAMNQAALMQTHTVKRDECGHPDHVNVSEKLKKQAVPQTNHINSYVIPKPEVIQSDGLPEDKREGFVGEVEIQVTPREMEQARGKSPASRVVEVEVLAPGSTPPSRVASRAPSRAVSTPPVVQRNGTPIEQNGMPGCQRGATPSAQTPVQVQRRSTLEQVENWVKVQKEERHGLVSTESTVPRRTPPIHPKYGTMDKYQSLPKTSRQSPPAPHHQLPSEYKYSHDRLNHFQKIHGHTKRPTTHDNTVWQLFEWQQRQQFRHGSPSAPVYTPAPDYSTAVSSTRNNSDVSRSVSVPPTLADIPPPGPPGARLMSPRRPHTPAERVTVRPLEDRPIVEVPPSNSPHRLRSYKSATIERRSMPPSAYITHTVSAPSLHGKTADDTYMHLKKDLEYLDLKVSGTEALKGRPAKPVKVAESDVDVTLSRLCEQDKILQELEFRLSGLKDDKDKLESVLDVSHQQMEQYKDQPSHTDKIAYQQRLLQEDLVHIRADISRVSTEMERAWDDYSRMEQSVEQLRDVLQTQMTLCTSPQEKNQLKRELWRIEDVMTGLSSTKETFKITVDSVKNPERKLVPSVIESTVPSRCMTPSAAEVRSPQRSLTSSPLPLPLDNEDLRNRHPVPNWEEDDAPPRPPLPLLYDEDTPPVVPPLPKETSVIRHTSVRGLKRQSDERKRDRESSYSNGDYRLELRSYLSEPELPVSAHGADHVDPGYLTLQRRGLSGSSSRINQYGVASCSLRRDLELSTMERPKSALERLCSGEPQLEQQSQPQRVRMSVEEQLERMKRHQRALVRERKRNLSQGERHHSRASTRPVNSDPGSALFVEPYRPASDEWLTVRARPVMELELEPLDFEFDITRELSTPQKVWIPQRLIDDESDEDLSPEEKETRSRTVAKIKTLLSKSSMRSSEQMDFSDLDLALQQQERIMSVPRALATEASIKRRQVTAKAMSEG</sequence>
<protein>
    <recommendedName>
        <fullName>Pleckstrin homology domain-containing family A member 7</fullName>
        <shortName>PH domain-containing family A member 7</shortName>
    </recommendedName>
    <alternativeName>
        <fullName>Heart adapter protein 1</fullName>
    </alternativeName>
</protein>
<accession>B6RSP1</accession>
<accession>A3KQE1</accession>
<evidence type="ECO:0000250" key="1"/>
<evidence type="ECO:0000255" key="2"/>
<evidence type="ECO:0000255" key="3">
    <source>
        <dbReference type="PROSITE-ProRule" id="PRU00145"/>
    </source>
</evidence>
<evidence type="ECO:0000255" key="4">
    <source>
        <dbReference type="PROSITE-ProRule" id="PRU00224"/>
    </source>
</evidence>
<evidence type="ECO:0000256" key="5">
    <source>
        <dbReference type="SAM" id="MobiDB-lite"/>
    </source>
</evidence>
<evidence type="ECO:0000305" key="6"/>
<comment type="function">
    <text evidence="1">Required for zonula adherens biogenesis and maintenance.</text>
</comment>
<comment type="subcellular location">
    <subcellularLocation>
        <location evidence="1">Cell junction</location>
        <location evidence="1">Adherens junction</location>
    </subcellularLocation>
    <subcellularLocation>
        <location evidence="1">Cytoplasm</location>
        <location evidence="1">Cytoskeleton</location>
        <location evidence="1">Microtubule organizing center</location>
        <location evidence="1">Centrosome</location>
    </subcellularLocation>
</comment>
<comment type="sequence caution" evidence="6">
    <conflict type="erroneous gene model prediction">
        <sequence resource="EMBL-CDS" id="CAM47001"/>
    </conflict>
</comment>
<proteinExistence type="evidence at transcript level"/>
<feature type="chain" id="PRO_0000395802" description="Pleckstrin homology domain-containing family A member 7">
    <location>
        <begin position="1"/>
        <end position="1197"/>
    </location>
</feature>
<feature type="domain" description="WW 1" evidence="4">
    <location>
        <begin position="8"/>
        <end position="41"/>
    </location>
</feature>
<feature type="domain" description="WW 2" evidence="4">
    <location>
        <begin position="53"/>
        <end position="86"/>
    </location>
</feature>
<feature type="domain" description="PH" evidence="3">
    <location>
        <begin position="158"/>
        <end position="257"/>
    </location>
</feature>
<feature type="region of interest" description="Disordered" evidence="5">
    <location>
        <begin position="98"/>
        <end position="148"/>
    </location>
</feature>
<feature type="region of interest" description="Disordered" evidence="5">
    <location>
        <begin position="348"/>
        <end position="384"/>
    </location>
</feature>
<feature type="region of interest" description="Disordered" evidence="5">
    <location>
        <begin position="423"/>
        <end position="467"/>
    </location>
</feature>
<feature type="region of interest" description="Disordered" evidence="5">
    <location>
        <begin position="508"/>
        <end position="577"/>
    </location>
</feature>
<feature type="region of interest" description="Disordered" evidence="5">
    <location>
        <begin position="830"/>
        <end position="928"/>
    </location>
</feature>
<feature type="region of interest" description="Disordered" evidence="5">
    <location>
        <begin position="1032"/>
        <end position="1064"/>
    </location>
</feature>
<feature type="coiled-coil region" evidence="2">
    <location>
        <begin position="678"/>
        <end position="799"/>
    </location>
</feature>
<feature type="coiled-coil region" evidence="2">
    <location>
        <begin position="1016"/>
        <end position="1044"/>
    </location>
</feature>
<feature type="compositionally biased region" description="Low complexity" evidence="5">
    <location>
        <begin position="111"/>
        <end position="140"/>
    </location>
</feature>
<feature type="compositionally biased region" description="Low complexity" evidence="5">
    <location>
        <begin position="528"/>
        <end position="546"/>
    </location>
</feature>
<feature type="compositionally biased region" description="Basic and acidic residues" evidence="5">
    <location>
        <begin position="568"/>
        <end position="577"/>
    </location>
</feature>
<feature type="compositionally biased region" description="Basic and acidic residues" evidence="5">
    <location>
        <begin position="913"/>
        <end position="924"/>
    </location>
</feature>
<feature type="compositionally biased region" description="Basic residues" evidence="5">
    <location>
        <begin position="1032"/>
        <end position="1043"/>
    </location>
</feature>
<feature type="sequence conflict" description="In Ref. 1; ACB38002." evidence="6" ref="1">
    <original>S</original>
    <variation>F</variation>
    <location>
        <position position="514"/>
    </location>
</feature>
<feature type="sequence conflict" description="In Ref. 1; ACB38002." evidence="6" ref="1">
    <original>S</original>
    <variation>P</variation>
    <location>
        <position position="535"/>
    </location>
</feature>
<feature type="sequence conflict" description="In Ref. 1; ACB38002." evidence="6" ref="1">
    <original>H</original>
    <variation>R</variation>
    <location>
        <position position="624"/>
    </location>
</feature>
<feature type="sequence conflict" description="In Ref. 1; ACB38002." evidence="6" ref="1">
    <original>D</original>
    <variation>G</variation>
    <location>
        <position position="638"/>
    </location>
</feature>
<feature type="sequence conflict" description="In Ref. 1; ACB38002." evidence="6" ref="1">
    <original>R</original>
    <variation>G</variation>
    <location>
        <position position="756"/>
    </location>
</feature>
<feature type="sequence conflict" description="In Ref. 1; ACB38002." evidence="6" ref="1">
    <original>I</original>
    <variation>M</variation>
    <location>
        <position position="791"/>
    </location>
</feature>
<feature type="sequence conflict" description="In Ref. 1; ACB38002." evidence="6" ref="1">
    <original>P</original>
    <variation>S</variation>
    <location>
        <position position="853"/>
    </location>
</feature>
<feature type="sequence conflict" description="In Ref. 1; ACB38002." evidence="6" ref="1">
    <original>Y</original>
    <variation>H</variation>
    <location>
        <position position="1072"/>
    </location>
</feature>
<feature type="sequence conflict" description="In Ref. 1; ACB38002." evidence="6" ref="1">
    <original>L</original>
    <variation>S</variation>
    <location>
        <position position="1090"/>
    </location>
</feature>
<feature type="sequence conflict" description="In Ref. 1; ACB38002." evidence="6" ref="1">
    <original>L</original>
    <variation>P</variation>
    <location>
        <position position="1126"/>
    </location>
</feature>
<name>PKHA7_DANRE</name>
<gene>
    <name type="primary">plekha7</name>
    <name type="synonym">hadp1</name>
</gene>
<keyword id="KW-0965">Cell junction</keyword>
<keyword id="KW-0175">Coiled coil</keyword>
<keyword id="KW-0963">Cytoplasm</keyword>
<keyword id="KW-0206">Cytoskeleton</keyword>
<keyword id="KW-1185">Reference proteome</keyword>
<keyword id="KW-0677">Repeat</keyword>
<organism>
    <name type="scientific">Danio rerio</name>
    <name type="common">Zebrafish</name>
    <name type="synonym">Brachydanio rerio</name>
    <dbReference type="NCBI Taxonomy" id="7955"/>
    <lineage>
        <taxon>Eukaryota</taxon>
        <taxon>Metazoa</taxon>
        <taxon>Chordata</taxon>
        <taxon>Craniata</taxon>
        <taxon>Vertebrata</taxon>
        <taxon>Euteleostomi</taxon>
        <taxon>Actinopterygii</taxon>
        <taxon>Neopterygii</taxon>
        <taxon>Teleostei</taxon>
        <taxon>Ostariophysi</taxon>
        <taxon>Cypriniformes</taxon>
        <taxon>Danionidae</taxon>
        <taxon>Danioninae</taxon>
        <taxon>Danio</taxon>
    </lineage>
</organism>
<dbReference type="EMBL" id="EU380770">
    <property type="protein sequence ID" value="ACB38002.1"/>
    <property type="molecule type" value="mRNA"/>
</dbReference>
<dbReference type="EMBL" id="BX640463">
    <property type="protein sequence ID" value="CAM47001.1"/>
    <property type="status" value="ALT_SEQ"/>
    <property type="molecule type" value="Genomic_DNA"/>
</dbReference>
<dbReference type="EMBL" id="CR936464">
    <property type="status" value="NOT_ANNOTATED_CDS"/>
    <property type="molecule type" value="Genomic_DNA"/>
</dbReference>
<dbReference type="EMBL" id="CR391988">
    <property type="status" value="NOT_ANNOTATED_CDS"/>
    <property type="molecule type" value="Genomic_DNA"/>
</dbReference>
<dbReference type="RefSeq" id="NP_001129715.1">
    <property type="nucleotide sequence ID" value="NM_001136243.1"/>
</dbReference>
<dbReference type="SMR" id="B6RSP1"/>
<dbReference type="FunCoup" id="B6RSP1">
    <property type="interactions" value="3"/>
</dbReference>
<dbReference type="STRING" id="7955.ENSDARP00000133544"/>
<dbReference type="PaxDb" id="7955-ENSDARP00000080529"/>
<dbReference type="GeneID" id="571486"/>
<dbReference type="KEGG" id="dre:571486"/>
<dbReference type="AGR" id="ZFIN:ZDB-GENE-050419-75"/>
<dbReference type="CTD" id="571486"/>
<dbReference type="ZFIN" id="ZDB-GENE-050419-75">
    <property type="gene designation" value="plekha7a"/>
</dbReference>
<dbReference type="eggNOG" id="KOG0940">
    <property type="taxonomic scope" value="Eukaryota"/>
</dbReference>
<dbReference type="InParanoid" id="B6RSP1"/>
<dbReference type="OrthoDB" id="43122at2759"/>
<dbReference type="PhylomeDB" id="B6RSP1"/>
<dbReference type="PRO" id="PR:B6RSP1"/>
<dbReference type="Proteomes" id="UP000000437">
    <property type="component" value="Alternate scaffold 18"/>
</dbReference>
<dbReference type="Proteomes" id="UP000000437">
    <property type="component" value="Chromosome 18"/>
</dbReference>
<dbReference type="GO" id="GO:0005813">
    <property type="term" value="C:centrosome"/>
    <property type="evidence" value="ECO:0000250"/>
    <property type="project" value="UniProtKB"/>
</dbReference>
<dbReference type="GO" id="GO:0005737">
    <property type="term" value="C:cytoplasm"/>
    <property type="evidence" value="ECO:0007669"/>
    <property type="project" value="UniProtKB-KW"/>
</dbReference>
<dbReference type="GO" id="GO:0005915">
    <property type="term" value="C:zonula adherens"/>
    <property type="evidence" value="ECO:0000250"/>
    <property type="project" value="UniProtKB"/>
</dbReference>
<dbReference type="GO" id="GO:0070097">
    <property type="term" value="F:delta-catenin binding"/>
    <property type="evidence" value="ECO:0000250"/>
    <property type="project" value="UniProtKB"/>
</dbReference>
<dbReference type="GO" id="GO:0055007">
    <property type="term" value="P:cardiac muscle cell differentiation"/>
    <property type="evidence" value="ECO:0000315"/>
    <property type="project" value="ZFIN"/>
</dbReference>
<dbReference type="GO" id="GO:0090136">
    <property type="term" value="P:epithelial cell-cell adhesion"/>
    <property type="evidence" value="ECO:0000250"/>
    <property type="project" value="UniProtKB"/>
</dbReference>
<dbReference type="GO" id="GO:0008016">
    <property type="term" value="P:regulation of heart contraction"/>
    <property type="evidence" value="ECO:0000315"/>
    <property type="project" value="ZFIN"/>
</dbReference>
<dbReference type="GO" id="GO:0045218">
    <property type="term" value="P:zonula adherens maintenance"/>
    <property type="evidence" value="ECO:0000250"/>
    <property type="project" value="UniProtKB"/>
</dbReference>
<dbReference type="CDD" id="cd13248">
    <property type="entry name" value="PH_PEPP1_2_3"/>
    <property type="match status" value="1"/>
</dbReference>
<dbReference type="CDD" id="cd00201">
    <property type="entry name" value="WW"/>
    <property type="match status" value="1"/>
</dbReference>
<dbReference type="FunFam" id="2.30.29.30:FF:000083">
    <property type="entry name" value="Pleckstrin homology domain-containing family A member 5"/>
    <property type="match status" value="1"/>
</dbReference>
<dbReference type="Gene3D" id="2.20.70.10">
    <property type="match status" value="2"/>
</dbReference>
<dbReference type="Gene3D" id="2.30.29.30">
    <property type="entry name" value="Pleckstrin-homology domain (PH domain)/Phosphotyrosine-binding domain (PTB)"/>
    <property type="match status" value="1"/>
</dbReference>
<dbReference type="InterPro" id="IPR011993">
    <property type="entry name" value="PH-like_dom_sf"/>
</dbReference>
<dbReference type="InterPro" id="IPR001849">
    <property type="entry name" value="PH_domain"/>
</dbReference>
<dbReference type="InterPro" id="IPR040392">
    <property type="entry name" value="PKHA4-7_PH"/>
</dbReference>
<dbReference type="InterPro" id="IPR001202">
    <property type="entry name" value="WW_dom"/>
</dbReference>
<dbReference type="InterPro" id="IPR036020">
    <property type="entry name" value="WW_dom_sf"/>
</dbReference>
<dbReference type="PANTHER" id="PTHR12752">
    <property type="entry name" value="PHOSPHOINOSITOL 3-PHOSPHATE-BINDING PROTEIN"/>
    <property type="match status" value="1"/>
</dbReference>
<dbReference type="PANTHER" id="PTHR12752:SF4">
    <property type="entry name" value="PLECKSTRIN HOMOLOGY DOMAIN-CONTAINING FAMILY A MEMBER 7"/>
    <property type="match status" value="1"/>
</dbReference>
<dbReference type="Pfam" id="PF00169">
    <property type="entry name" value="PH"/>
    <property type="match status" value="1"/>
</dbReference>
<dbReference type="Pfam" id="PF00397">
    <property type="entry name" value="WW"/>
    <property type="match status" value="1"/>
</dbReference>
<dbReference type="SMART" id="SM00233">
    <property type="entry name" value="PH"/>
    <property type="match status" value="1"/>
</dbReference>
<dbReference type="SMART" id="SM00456">
    <property type="entry name" value="WW"/>
    <property type="match status" value="2"/>
</dbReference>
<dbReference type="SUPFAM" id="SSF50729">
    <property type="entry name" value="PH domain-like"/>
    <property type="match status" value="1"/>
</dbReference>
<dbReference type="SUPFAM" id="SSF51045">
    <property type="entry name" value="WW domain"/>
    <property type="match status" value="2"/>
</dbReference>
<dbReference type="PROSITE" id="PS50003">
    <property type="entry name" value="PH_DOMAIN"/>
    <property type="match status" value="1"/>
</dbReference>
<dbReference type="PROSITE" id="PS01159">
    <property type="entry name" value="WW_DOMAIN_1"/>
    <property type="match status" value="1"/>
</dbReference>
<dbReference type="PROSITE" id="PS50020">
    <property type="entry name" value="WW_DOMAIN_2"/>
    <property type="match status" value="2"/>
</dbReference>